<reference key="1">
    <citation type="submission" date="2004-11" db="EMBL/GenBank/DDBJ databases">
        <title>Complete genome sequence of Thermus thermophilus HB8.</title>
        <authorList>
            <person name="Masui R."/>
            <person name="Kurokawa K."/>
            <person name="Nakagawa N."/>
            <person name="Tokunaga F."/>
            <person name="Koyama Y."/>
            <person name="Shibata T."/>
            <person name="Oshima T."/>
            <person name="Yokoyama S."/>
            <person name="Yasunaga T."/>
            <person name="Kuramitsu S."/>
        </authorList>
    </citation>
    <scope>NUCLEOTIDE SEQUENCE [LARGE SCALE GENOMIC DNA]</scope>
    <source>
        <strain>ATCC 27634 / DSM 579 / HB8</strain>
    </source>
</reference>
<reference key="2">
    <citation type="submission" date="2007-06" db="PDB data bank">
        <title>Crystal structure of 2-C-methyl-D-erythritol 4-phosphate cytidylyltransferase from Thermus thermophilus HB8.</title>
        <authorList>
            <consortium name="Southeast collaboratory for structural genomics (SECSG)"/>
        </authorList>
    </citation>
    <scope>X-RAY CRYSTALLOGRAPHY (2.2 ANGSTROMS)</scope>
</reference>
<evidence type="ECO:0000255" key="1">
    <source>
        <dbReference type="HAMAP-Rule" id="MF_00108"/>
    </source>
</evidence>
<evidence type="ECO:0007829" key="2">
    <source>
        <dbReference type="PDB" id="2PX7"/>
    </source>
</evidence>
<keyword id="KW-0002">3D-structure</keyword>
<keyword id="KW-0414">Isoprene biosynthesis</keyword>
<keyword id="KW-0548">Nucleotidyltransferase</keyword>
<keyword id="KW-1185">Reference proteome</keyword>
<keyword id="KW-0808">Transferase</keyword>
<feature type="chain" id="PRO_0000075640" description="2-C-methyl-D-erythritol 4-phosphate cytidylyltransferase">
    <location>
        <begin position="1"/>
        <end position="213"/>
    </location>
</feature>
<feature type="site" description="Transition state stabilizer" evidence="1">
    <location>
        <position position="15"/>
    </location>
</feature>
<feature type="site" description="Transition state stabilizer" evidence="1">
    <location>
        <position position="21"/>
    </location>
</feature>
<feature type="site" description="Positions MEP for the nucleophilic attack" evidence="1">
    <location>
        <position position="138"/>
    </location>
</feature>
<feature type="site" description="Positions MEP for the nucleophilic attack" evidence="1">
    <location>
        <position position="194"/>
    </location>
</feature>
<feature type="strand" evidence="2">
    <location>
        <begin position="4"/>
        <end position="8"/>
    </location>
</feature>
<feature type="helix" evidence="2">
    <location>
        <begin position="21"/>
        <end position="23"/>
    </location>
</feature>
<feature type="strand" evidence="2">
    <location>
        <begin position="27"/>
        <end position="30"/>
    </location>
</feature>
<feature type="helix" evidence="2">
    <location>
        <begin position="31"/>
        <end position="38"/>
    </location>
</feature>
<feature type="turn" evidence="2">
    <location>
        <begin position="39"/>
        <end position="41"/>
    </location>
</feature>
<feature type="strand" evidence="2">
    <location>
        <begin position="43"/>
        <end position="49"/>
    </location>
</feature>
<feature type="strand" evidence="2">
    <location>
        <begin position="62"/>
        <end position="65"/>
    </location>
</feature>
<feature type="helix" evidence="2">
    <location>
        <begin position="70"/>
        <end position="80"/>
    </location>
</feature>
<feature type="strand" evidence="2">
    <location>
        <begin position="83"/>
        <end position="88"/>
    </location>
</feature>
<feature type="helix" evidence="2">
    <location>
        <begin position="98"/>
        <end position="111"/>
    </location>
</feature>
<feature type="strand" evidence="2">
    <location>
        <begin position="112"/>
        <end position="119"/>
    </location>
</feature>
<feature type="strand" evidence="2">
    <location>
        <begin position="122"/>
        <end position="127"/>
    </location>
</feature>
<feature type="strand" evidence="2">
    <location>
        <begin position="129"/>
        <end position="131"/>
    </location>
</feature>
<feature type="strand" evidence="2">
    <location>
        <begin position="133"/>
        <end position="136"/>
    </location>
</feature>
<feature type="helix" evidence="2">
    <location>
        <begin position="138"/>
        <end position="140"/>
    </location>
</feature>
<feature type="strand" evidence="2">
    <location>
        <begin position="142"/>
        <end position="144"/>
    </location>
</feature>
<feature type="strand" evidence="2">
    <location>
        <begin position="148"/>
        <end position="151"/>
    </location>
</feature>
<feature type="helix" evidence="2">
    <location>
        <begin position="152"/>
        <end position="165"/>
    </location>
</feature>
<feature type="helix" evidence="2">
    <location>
        <begin position="172"/>
        <end position="178"/>
    </location>
</feature>
<feature type="strand" evidence="2">
    <location>
        <begin position="184"/>
        <end position="187"/>
    </location>
</feature>
<feature type="helix" evidence="2">
    <location>
        <begin position="198"/>
        <end position="208"/>
    </location>
</feature>
<protein>
    <recommendedName>
        <fullName evidence="1">2-C-methyl-D-erythritol 4-phosphate cytidylyltransferase</fullName>
        <ecNumber evidence="1">2.7.7.60</ecNumber>
    </recommendedName>
    <alternativeName>
        <fullName evidence="1">4-diphosphocytidyl-2C-methyl-D-erythritol synthase</fullName>
    </alternativeName>
    <alternativeName>
        <fullName evidence="1">MEP cytidylyltransferase</fullName>
        <shortName evidence="1">MCT</shortName>
    </alternativeName>
</protein>
<accession>Q5SLX2</accession>
<name>ISPD_THET8</name>
<gene>
    <name evidence="1" type="primary">ispD</name>
    <name type="ordered locus">TTHA0171</name>
</gene>
<comment type="function">
    <text evidence="1">Catalyzes the formation of 4-diphosphocytidyl-2-C-methyl-D-erythritol from CTP and 2-C-methyl-D-erythritol 4-phosphate (MEP).</text>
</comment>
<comment type="catalytic activity">
    <reaction evidence="1">
        <text>2-C-methyl-D-erythritol 4-phosphate + CTP + H(+) = 4-CDP-2-C-methyl-D-erythritol + diphosphate</text>
        <dbReference type="Rhea" id="RHEA:13429"/>
        <dbReference type="ChEBI" id="CHEBI:15378"/>
        <dbReference type="ChEBI" id="CHEBI:33019"/>
        <dbReference type="ChEBI" id="CHEBI:37563"/>
        <dbReference type="ChEBI" id="CHEBI:57823"/>
        <dbReference type="ChEBI" id="CHEBI:58262"/>
        <dbReference type="EC" id="2.7.7.60"/>
    </reaction>
</comment>
<comment type="pathway">
    <text evidence="1">Isoprenoid biosynthesis; isopentenyl diphosphate biosynthesis via DXP pathway; isopentenyl diphosphate from 1-deoxy-D-xylulose 5-phosphate: step 2/6.</text>
</comment>
<comment type="similarity">
    <text evidence="1">Belongs to the IspD/TarI cytidylyltransferase family. IspD subfamily.</text>
</comment>
<proteinExistence type="evidence at protein level"/>
<sequence length="213" mass="22423">MEVSVLIPAAGNGLRLGRGPKAFLQVGGRTLLEWTLAAFRDAAEVLVALPPGAEPPKGLGAVFLEGGATRQASVARLLEAASLPLVLVHDVARPFVSRGLVARVLEAAQRSGAAVPVLPVPDTLMAPEGEAYGRVVPREAFRLVQTPQGFFTALLREAHAYARRKGLEASDDAQLVQALGYPVALVEGEATAFKITHPQDLVLAEALARVWSA</sequence>
<organism>
    <name type="scientific">Thermus thermophilus (strain ATCC 27634 / DSM 579 / HB8)</name>
    <dbReference type="NCBI Taxonomy" id="300852"/>
    <lineage>
        <taxon>Bacteria</taxon>
        <taxon>Thermotogati</taxon>
        <taxon>Deinococcota</taxon>
        <taxon>Deinococci</taxon>
        <taxon>Thermales</taxon>
        <taxon>Thermaceae</taxon>
        <taxon>Thermus</taxon>
    </lineage>
</organism>
<dbReference type="EC" id="2.7.7.60" evidence="1"/>
<dbReference type="EMBL" id="AP008226">
    <property type="protein sequence ID" value="BAD69994.1"/>
    <property type="molecule type" value="Genomic_DNA"/>
</dbReference>
<dbReference type="RefSeq" id="WP_011174170.1">
    <property type="nucleotide sequence ID" value="NC_006461.1"/>
</dbReference>
<dbReference type="RefSeq" id="YP_143437.1">
    <property type="nucleotide sequence ID" value="NC_006461.1"/>
</dbReference>
<dbReference type="PDB" id="2PX7">
    <property type="method" value="X-ray"/>
    <property type="resolution" value="2.20 A"/>
    <property type="chains" value="A/B=1-213"/>
</dbReference>
<dbReference type="PDBsum" id="2PX7"/>
<dbReference type="SMR" id="Q5SLX2"/>
<dbReference type="EnsemblBacteria" id="BAD69994">
    <property type="protein sequence ID" value="BAD69994"/>
    <property type="gene ID" value="BAD69994"/>
</dbReference>
<dbReference type="GeneID" id="3169663"/>
<dbReference type="KEGG" id="ttj:TTHA0171"/>
<dbReference type="PATRIC" id="fig|300852.9.peg.169"/>
<dbReference type="eggNOG" id="COG1211">
    <property type="taxonomic scope" value="Bacteria"/>
</dbReference>
<dbReference type="HOGENOM" id="CLU_061281_2_2_0"/>
<dbReference type="PhylomeDB" id="Q5SLX2"/>
<dbReference type="UniPathway" id="UPA00056">
    <property type="reaction ID" value="UER00093"/>
</dbReference>
<dbReference type="EvolutionaryTrace" id="Q5SLX2"/>
<dbReference type="Proteomes" id="UP000000532">
    <property type="component" value="Chromosome"/>
</dbReference>
<dbReference type="GO" id="GO:0050518">
    <property type="term" value="F:2-C-methyl-D-erythritol 4-phosphate cytidylyltransferase activity"/>
    <property type="evidence" value="ECO:0007669"/>
    <property type="project" value="UniProtKB-UniRule"/>
</dbReference>
<dbReference type="GO" id="GO:0019288">
    <property type="term" value="P:isopentenyl diphosphate biosynthetic process, methylerythritol 4-phosphate pathway"/>
    <property type="evidence" value="ECO:0007669"/>
    <property type="project" value="UniProtKB-UniRule"/>
</dbReference>
<dbReference type="CDD" id="cd02516">
    <property type="entry name" value="CDP-ME_synthetase"/>
    <property type="match status" value="1"/>
</dbReference>
<dbReference type="Gene3D" id="3.90.550.10">
    <property type="entry name" value="Spore Coat Polysaccharide Biosynthesis Protein SpsA, Chain A"/>
    <property type="match status" value="1"/>
</dbReference>
<dbReference type="HAMAP" id="MF_00108">
    <property type="entry name" value="IspD"/>
    <property type="match status" value="1"/>
</dbReference>
<dbReference type="InterPro" id="IPR001228">
    <property type="entry name" value="IspD"/>
</dbReference>
<dbReference type="InterPro" id="IPR034683">
    <property type="entry name" value="IspD/TarI"/>
</dbReference>
<dbReference type="InterPro" id="IPR050088">
    <property type="entry name" value="IspD/TarI_cytidylyltransf_bact"/>
</dbReference>
<dbReference type="InterPro" id="IPR018294">
    <property type="entry name" value="ISPD_synthase_CS"/>
</dbReference>
<dbReference type="InterPro" id="IPR029044">
    <property type="entry name" value="Nucleotide-diphossugar_trans"/>
</dbReference>
<dbReference type="NCBIfam" id="TIGR00453">
    <property type="entry name" value="ispD"/>
    <property type="match status" value="1"/>
</dbReference>
<dbReference type="PANTHER" id="PTHR32125">
    <property type="entry name" value="2-C-METHYL-D-ERYTHRITOL 4-PHOSPHATE CYTIDYLYLTRANSFERASE, CHLOROPLASTIC"/>
    <property type="match status" value="1"/>
</dbReference>
<dbReference type="PANTHER" id="PTHR32125:SF4">
    <property type="entry name" value="2-C-METHYL-D-ERYTHRITOL 4-PHOSPHATE CYTIDYLYLTRANSFERASE, CHLOROPLASTIC"/>
    <property type="match status" value="1"/>
</dbReference>
<dbReference type="Pfam" id="PF01128">
    <property type="entry name" value="IspD"/>
    <property type="match status" value="1"/>
</dbReference>
<dbReference type="SUPFAM" id="SSF53448">
    <property type="entry name" value="Nucleotide-diphospho-sugar transferases"/>
    <property type="match status" value="1"/>
</dbReference>
<dbReference type="PROSITE" id="PS01295">
    <property type="entry name" value="ISPD"/>
    <property type="match status" value="1"/>
</dbReference>